<feature type="chain" id="PRO_1000009220" description="UPF0102 protein Gmet_2864">
    <location>
        <begin position="1"/>
        <end position="122"/>
    </location>
</feature>
<protein>
    <recommendedName>
        <fullName evidence="1">UPF0102 protein Gmet_2864</fullName>
    </recommendedName>
</protein>
<gene>
    <name type="ordered locus">Gmet_2864</name>
</gene>
<sequence length="122" mass="13839">MSLHNKSLGSKGESLAVTYLERHRYKILERNFRCRGGEIDIVARDGKTIVFVEVKTRTSGHYGPPQLAVTSFKQRQISKAALTWLAKQRQLDACARFDVISITFSGQMPQIEHIPNAFELAY</sequence>
<keyword id="KW-1185">Reference proteome</keyword>
<proteinExistence type="inferred from homology"/>
<organism>
    <name type="scientific">Geobacter metallireducens (strain ATCC 53774 / DSM 7210 / GS-15)</name>
    <dbReference type="NCBI Taxonomy" id="269799"/>
    <lineage>
        <taxon>Bacteria</taxon>
        <taxon>Pseudomonadati</taxon>
        <taxon>Thermodesulfobacteriota</taxon>
        <taxon>Desulfuromonadia</taxon>
        <taxon>Geobacterales</taxon>
        <taxon>Geobacteraceae</taxon>
        <taxon>Geobacter</taxon>
    </lineage>
</organism>
<dbReference type="EMBL" id="CP000148">
    <property type="protein sequence ID" value="ABB33082.1"/>
    <property type="molecule type" value="Genomic_DNA"/>
</dbReference>
<dbReference type="RefSeq" id="WP_004514595.1">
    <property type="nucleotide sequence ID" value="NC_007517.1"/>
</dbReference>
<dbReference type="SMR" id="Q39RP2"/>
<dbReference type="STRING" id="269799.Gmet_2864"/>
<dbReference type="KEGG" id="gme:Gmet_2864"/>
<dbReference type="eggNOG" id="COG0792">
    <property type="taxonomic scope" value="Bacteria"/>
</dbReference>
<dbReference type="HOGENOM" id="CLU_115353_2_3_7"/>
<dbReference type="Proteomes" id="UP000007073">
    <property type="component" value="Chromosome"/>
</dbReference>
<dbReference type="GO" id="GO:0003676">
    <property type="term" value="F:nucleic acid binding"/>
    <property type="evidence" value="ECO:0007669"/>
    <property type="project" value="InterPro"/>
</dbReference>
<dbReference type="CDD" id="cd20736">
    <property type="entry name" value="PoNe_Nuclease"/>
    <property type="match status" value="1"/>
</dbReference>
<dbReference type="Gene3D" id="3.40.1350.10">
    <property type="match status" value="1"/>
</dbReference>
<dbReference type="HAMAP" id="MF_00048">
    <property type="entry name" value="UPF0102"/>
    <property type="match status" value="1"/>
</dbReference>
<dbReference type="InterPro" id="IPR011335">
    <property type="entry name" value="Restrct_endonuc-II-like"/>
</dbReference>
<dbReference type="InterPro" id="IPR011856">
    <property type="entry name" value="tRNA_endonuc-like_dom_sf"/>
</dbReference>
<dbReference type="InterPro" id="IPR003509">
    <property type="entry name" value="UPF0102_YraN-like"/>
</dbReference>
<dbReference type="NCBIfam" id="NF009150">
    <property type="entry name" value="PRK12497.1-3"/>
    <property type="match status" value="1"/>
</dbReference>
<dbReference type="NCBIfam" id="NF009154">
    <property type="entry name" value="PRK12497.3-3"/>
    <property type="match status" value="1"/>
</dbReference>
<dbReference type="NCBIfam" id="NF011268">
    <property type="entry name" value="PRK14675.1"/>
    <property type="match status" value="1"/>
</dbReference>
<dbReference type="NCBIfam" id="TIGR00252">
    <property type="entry name" value="YraN family protein"/>
    <property type="match status" value="1"/>
</dbReference>
<dbReference type="PANTHER" id="PTHR34039">
    <property type="entry name" value="UPF0102 PROTEIN YRAN"/>
    <property type="match status" value="1"/>
</dbReference>
<dbReference type="PANTHER" id="PTHR34039:SF1">
    <property type="entry name" value="UPF0102 PROTEIN YRAN"/>
    <property type="match status" value="1"/>
</dbReference>
<dbReference type="Pfam" id="PF02021">
    <property type="entry name" value="UPF0102"/>
    <property type="match status" value="1"/>
</dbReference>
<dbReference type="SUPFAM" id="SSF52980">
    <property type="entry name" value="Restriction endonuclease-like"/>
    <property type="match status" value="1"/>
</dbReference>
<reference key="1">
    <citation type="journal article" date="2009" name="BMC Microbiol.">
        <title>The genome sequence of Geobacter metallireducens: features of metabolism, physiology and regulation common and dissimilar to Geobacter sulfurreducens.</title>
        <authorList>
            <person name="Aklujkar M."/>
            <person name="Krushkal J."/>
            <person name="DiBartolo G."/>
            <person name="Lapidus A."/>
            <person name="Land M.L."/>
            <person name="Lovley D.R."/>
        </authorList>
    </citation>
    <scope>NUCLEOTIDE SEQUENCE [LARGE SCALE GENOMIC DNA]</scope>
    <source>
        <strain>ATCC 53774 / DSM 7210 / GS-15</strain>
    </source>
</reference>
<accession>Q39RP2</accession>
<name>Y2864_GEOMG</name>
<evidence type="ECO:0000255" key="1">
    <source>
        <dbReference type="HAMAP-Rule" id="MF_00048"/>
    </source>
</evidence>
<comment type="similarity">
    <text evidence="1">Belongs to the UPF0102 family.</text>
</comment>